<feature type="chain" id="PRO_0000326729" description="Acylphosphatase">
    <location>
        <begin position="1"/>
        <end position="92"/>
    </location>
</feature>
<feature type="domain" description="Acylphosphatase-like" evidence="1">
    <location>
        <begin position="4"/>
        <end position="92"/>
    </location>
</feature>
<feature type="active site" evidence="1">
    <location>
        <position position="19"/>
    </location>
</feature>
<feature type="active site" evidence="1">
    <location>
        <position position="37"/>
    </location>
</feature>
<dbReference type="EC" id="3.6.1.7"/>
<dbReference type="EMBL" id="CR936503">
    <property type="protein sequence ID" value="CAI55684.1"/>
    <property type="molecule type" value="Genomic_DNA"/>
</dbReference>
<dbReference type="RefSeq" id="WP_011375075.1">
    <property type="nucleotide sequence ID" value="NC_007576.1"/>
</dbReference>
<dbReference type="SMR" id="Q38VU9"/>
<dbReference type="STRING" id="314315.LCA_1381"/>
<dbReference type="KEGG" id="lsa:LCA_1381"/>
<dbReference type="eggNOG" id="COG1254">
    <property type="taxonomic scope" value="Bacteria"/>
</dbReference>
<dbReference type="HOGENOM" id="CLU_141932_2_1_9"/>
<dbReference type="OrthoDB" id="9808093at2"/>
<dbReference type="Proteomes" id="UP000002707">
    <property type="component" value="Chromosome"/>
</dbReference>
<dbReference type="GO" id="GO:0003998">
    <property type="term" value="F:acylphosphatase activity"/>
    <property type="evidence" value="ECO:0007669"/>
    <property type="project" value="UniProtKB-EC"/>
</dbReference>
<dbReference type="Gene3D" id="3.30.70.100">
    <property type="match status" value="1"/>
</dbReference>
<dbReference type="InterPro" id="IPR020456">
    <property type="entry name" value="Acylphosphatase"/>
</dbReference>
<dbReference type="InterPro" id="IPR001792">
    <property type="entry name" value="Acylphosphatase-like_dom"/>
</dbReference>
<dbReference type="InterPro" id="IPR036046">
    <property type="entry name" value="Acylphosphatase-like_dom_sf"/>
</dbReference>
<dbReference type="InterPro" id="IPR017968">
    <property type="entry name" value="Acylphosphatase_CS"/>
</dbReference>
<dbReference type="PANTHER" id="PTHR47268">
    <property type="entry name" value="ACYLPHOSPHATASE"/>
    <property type="match status" value="1"/>
</dbReference>
<dbReference type="PANTHER" id="PTHR47268:SF4">
    <property type="entry name" value="ACYLPHOSPHATASE"/>
    <property type="match status" value="1"/>
</dbReference>
<dbReference type="Pfam" id="PF00708">
    <property type="entry name" value="Acylphosphatase"/>
    <property type="match status" value="1"/>
</dbReference>
<dbReference type="PRINTS" id="PR00112">
    <property type="entry name" value="ACYLPHPHTASE"/>
</dbReference>
<dbReference type="SUPFAM" id="SSF54975">
    <property type="entry name" value="Acylphosphatase/BLUF domain-like"/>
    <property type="match status" value="1"/>
</dbReference>
<dbReference type="PROSITE" id="PS00150">
    <property type="entry name" value="ACYLPHOSPHATASE_1"/>
    <property type="match status" value="1"/>
</dbReference>
<dbReference type="PROSITE" id="PS51160">
    <property type="entry name" value="ACYLPHOSPHATASE_3"/>
    <property type="match status" value="1"/>
</dbReference>
<gene>
    <name type="primary">acyP</name>
    <name type="ordered locus">LCA_1381</name>
</gene>
<organism>
    <name type="scientific">Latilactobacillus sakei subsp. sakei (strain 23K)</name>
    <name type="common">Lactobacillus sakei subsp. sakei</name>
    <dbReference type="NCBI Taxonomy" id="314315"/>
    <lineage>
        <taxon>Bacteria</taxon>
        <taxon>Bacillati</taxon>
        <taxon>Bacillota</taxon>
        <taxon>Bacilli</taxon>
        <taxon>Lactobacillales</taxon>
        <taxon>Lactobacillaceae</taxon>
        <taxon>Latilactobacillus</taxon>
    </lineage>
</organism>
<keyword id="KW-0378">Hydrolase</keyword>
<keyword id="KW-1185">Reference proteome</keyword>
<reference key="1">
    <citation type="journal article" date="2005" name="Nat. Biotechnol.">
        <title>The complete genome sequence of the meat-borne lactic acid bacterium Lactobacillus sakei 23K.</title>
        <authorList>
            <person name="Chaillou S."/>
            <person name="Champomier-Verges M.-C."/>
            <person name="Cornet M."/>
            <person name="Crutz-Le Coq A.-M."/>
            <person name="Dudez A.-M."/>
            <person name="Martin V."/>
            <person name="Beaufils S."/>
            <person name="Darbon-Rongere E."/>
            <person name="Bossy R."/>
            <person name="Loux V."/>
            <person name="Zagorec M."/>
        </authorList>
    </citation>
    <scope>NUCLEOTIDE SEQUENCE [LARGE SCALE GENOMIC DNA]</scope>
    <source>
        <strain>23K</strain>
    </source>
</reference>
<name>ACYP_LATSS</name>
<sequence length="92" mass="9750">MQKAVQLDVFGRVQGVGFRWTTKLVADRLGITGTVSNQPDGSVKIIAMGPDAILEQFIGAVKASPTPSGRVDRVVQTPLQDVSACHKFSVVG</sequence>
<proteinExistence type="inferred from homology"/>
<accession>Q38VU9</accession>
<comment type="catalytic activity">
    <reaction>
        <text>an acyl phosphate + H2O = a carboxylate + phosphate + H(+)</text>
        <dbReference type="Rhea" id="RHEA:14965"/>
        <dbReference type="ChEBI" id="CHEBI:15377"/>
        <dbReference type="ChEBI" id="CHEBI:15378"/>
        <dbReference type="ChEBI" id="CHEBI:29067"/>
        <dbReference type="ChEBI" id="CHEBI:43474"/>
        <dbReference type="ChEBI" id="CHEBI:59918"/>
        <dbReference type="EC" id="3.6.1.7"/>
    </reaction>
</comment>
<comment type="similarity">
    <text evidence="2">Belongs to the acylphosphatase family.</text>
</comment>
<evidence type="ECO:0000255" key="1">
    <source>
        <dbReference type="PROSITE-ProRule" id="PRU00520"/>
    </source>
</evidence>
<evidence type="ECO:0000305" key="2"/>
<protein>
    <recommendedName>
        <fullName>Acylphosphatase</fullName>
        <ecNumber>3.6.1.7</ecNumber>
    </recommendedName>
    <alternativeName>
        <fullName>Acylphosphate phosphohydrolase</fullName>
    </alternativeName>
</protein>